<name>GLMM_LACLM</name>
<gene>
    <name evidence="1" type="primary">glmM</name>
    <name type="ordered locus">llmg_0451</name>
</gene>
<proteinExistence type="inferred from homology"/>
<reference key="1">
    <citation type="journal article" date="2007" name="J. Bacteriol.">
        <title>The complete genome sequence of the lactic acid bacterial paradigm Lactococcus lactis subsp. cremoris MG1363.</title>
        <authorList>
            <person name="Wegmann U."/>
            <person name="O'Connell-Motherway M."/>
            <person name="Zomer A."/>
            <person name="Buist G."/>
            <person name="Shearman C."/>
            <person name="Canchaya C."/>
            <person name="Ventura M."/>
            <person name="Goesmann A."/>
            <person name="Gasson M.J."/>
            <person name="Kuipers O.P."/>
            <person name="van Sinderen D."/>
            <person name="Kok J."/>
        </authorList>
    </citation>
    <scope>NUCLEOTIDE SEQUENCE [LARGE SCALE GENOMIC DNA]</scope>
    <source>
        <strain>MG1363</strain>
    </source>
</reference>
<organism>
    <name type="scientific">Lactococcus lactis subsp. cremoris (strain MG1363)</name>
    <dbReference type="NCBI Taxonomy" id="416870"/>
    <lineage>
        <taxon>Bacteria</taxon>
        <taxon>Bacillati</taxon>
        <taxon>Bacillota</taxon>
        <taxon>Bacilli</taxon>
        <taxon>Lactobacillales</taxon>
        <taxon>Streptococcaceae</taxon>
        <taxon>Lactococcus</taxon>
        <taxon>Lactococcus cremoris subsp. cremoris</taxon>
    </lineage>
</organism>
<comment type="function">
    <text evidence="1">Catalyzes the conversion of glucosamine-6-phosphate to glucosamine-1-phosphate.</text>
</comment>
<comment type="catalytic activity">
    <reaction evidence="1">
        <text>alpha-D-glucosamine 1-phosphate = D-glucosamine 6-phosphate</text>
        <dbReference type="Rhea" id="RHEA:23424"/>
        <dbReference type="ChEBI" id="CHEBI:58516"/>
        <dbReference type="ChEBI" id="CHEBI:58725"/>
        <dbReference type="EC" id="5.4.2.10"/>
    </reaction>
</comment>
<comment type="cofactor">
    <cofactor evidence="1">
        <name>Mg(2+)</name>
        <dbReference type="ChEBI" id="CHEBI:18420"/>
    </cofactor>
    <text evidence="1">Binds 1 Mg(2+) ion per subunit.</text>
</comment>
<comment type="PTM">
    <text evidence="1">Activated by phosphorylation.</text>
</comment>
<comment type="similarity">
    <text evidence="1">Belongs to the phosphohexose mutase family.</text>
</comment>
<sequence>MGKYFGTDGVRGEANVELTPEMAFKLGRFGGYVLSQHELETPKVYVGRDTRISGQMLASSLISGLLSVGIEVYDLGVIATPGVAYLVKKDGASAGVMISASHNPALDNGIKFFGGDGYKLEDEKELEIEALIDAKEDTLPRPSAQGLGMLHDYIEGVRKYQAFLKTTAEGDFEGYNVVLDTANGASYTSARAVFADLKANLTVIGENPDGLNINVKVGSTHPEAMAKKVVETGSDLGLAFDGDADRLIAVDENGEIVDGDKIMFIVGKYLLEQGKLAQDTLVTTVMSNLGFHLALEEAGINSVITAVGDRYVVEEMKKNNYNFGGEQSGHMIFLDYNTTGDGQLSAIQLLKVMRETGKTLSELASEVTIYPQKLVNVRVKDNAAKKSAMDVPAIQKVISEMETSMNGKGRILVRPSGTEPLLRVMAEAPTHEQVDHVVDTIVEVVEEEIGVK</sequence>
<dbReference type="EC" id="5.4.2.10" evidence="1"/>
<dbReference type="EMBL" id="AM406671">
    <property type="protein sequence ID" value="CAL97055.1"/>
    <property type="molecule type" value="Genomic_DNA"/>
</dbReference>
<dbReference type="RefSeq" id="WP_011834493.1">
    <property type="nucleotide sequence ID" value="NC_009004.1"/>
</dbReference>
<dbReference type="SMR" id="A2RIG0"/>
<dbReference type="STRING" id="416870.llmg_0451"/>
<dbReference type="KEGG" id="llm:llmg_0451"/>
<dbReference type="eggNOG" id="COG1109">
    <property type="taxonomic scope" value="Bacteria"/>
</dbReference>
<dbReference type="HOGENOM" id="CLU_016950_7_0_9"/>
<dbReference type="OrthoDB" id="9806956at2"/>
<dbReference type="PhylomeDB" id="A2RIG0"/>
<dbReference type="Proteomes" id="UP000000364">
    <property type="component" value="Chromosome"/>
</dbReference>
<dbReference type="GO" id="GO:0005829">
    <property type="term" value="C:cytosol"/>
    <property type="evidence" value="ECO:0007669"/>
    <property type="project" value="TreeGrafter"/>
</dbReference>
<dbReference type="GO" id="GO:0000287">
    <property type="term" value="F:magnesium ion binding"/>
    <property type="evidence" value="ECO:0007669"/>
    <property type="project" value="UniProtKB-UniRule"/>
</dbReference>
<dbReference type="GO" id="GO:0008966">
    <property type="term" value="F:phosphoglucosamine mutase activity"/>
    <property type="evidence" value="ECO:0007669"/>
    <property type="project" value="UniProtKB-UniRule"/>
</dbReference>
<dbReference type="GO" id="GO:0004615">
    <property type="term" value="F:phosphomannomutase activity"/>
    <property type="evidence" value="ECO:0007669"/>
    <property type="project" value="TreeGrafter"/>
</dbReference>
<dbReference type="GO" id="GO:0005975">
    <property type="term" value="P:carbohydrate metabolic process"/>
    <property type="evidence" value="ECO:0007669"/>
    <property type="project" value="InterPro"/>
</dbReference>
<dbReference type="GO" id="GO:0009252">
    <property type="term" value="P:peptidoglycan biosynthetic process"/>
    <property type="evidence" value="ECO:0007669"/>
    <property type="project" value="TreeGrafter"/>
</dbReference>
<dbReference type="GO" id="GO:0006048">
    <property type="term" value="P:UDP-N-acetylglucosamine biosynthetic process"/>
    <property type="evidence" value="ECO:0007669"/>
    <property type="project" value="TreeGrafter"/>
</dbReference>
<dbReference type="CDD" id="cd05802">
    <property type="entry name" value="GlmM"/>
    <property type="match status" value="1"/>
</dbReference>
<dbReference type="FunFam" id="3.30.310.50:FF:000001">
    <property type="entry name" value="Phosphoglucosamine mutase"/>
    <property type="match status" value="1"/>
</dbReference>
<dbReference type="FunFam" id="3.40.120.10:FF:000001">
    <property type="entry name" value="Phosphoglucosamine mutase"/>
    <property type="match status" value="1"/>
</dbReference>
<dbReference type="FunFam" id="3.40.120.10:FF:000002">
    <property type="entry name" value="Phosphoglucosamine mutase"/>
    <property type="match status" value="1"/>
</dbReference>
<dbReference type="Gene3D" id="3.40.120.10">
    <property type="entry name" value="Alpha-D-Glucose-1,6-Bisphosphate, subunit A, domain 3"/>
    <property type="match status" value="3"/>
</dbReference>
<dbReference type="Gene3D" id="3.30.310.50">
    <property type="entry name" value="Alpha-D-phosphohexomutase, C-terminal domain"/>
    <property type="match status" value="1"/>
</dbReference>
<dbReference type="HAMAP" id="MF_01554_B">
    <property type="entry name" value="GlmM_B"/>
    <property type="match status" value="1"/>
</dbReference>
<dbReference type="InterPro" id="IPR005844">
    <property type="entry name" value="A-D-PHexomutase_a/b/a-I"/>
</dbReference>
<dbReference type="InterPro" id="IPR016055">
    <property type="entry name" value="A-D-PHexomutase_a/b/a-I/II/III"/>
</dbReference>
<dbReference type="InterPro" id="IPR005845">
    <property type="entry name" value="A-D-PHexomutase_a/b/a-II"/>
</dbReference>
<dbReference type="InterPro" id="IPR005846">
    <property type="entry name" value="A-D-PHexomutase_a/b/a-III"/>
</dbReference>
<dbReference type="InterPro" id="IPR005843">
    <property type="entry name" value="A-D-PHexomutase_C"/>
</dbReference>
<dbReference type="InterPro" id="IPR036900">
    <property type="entry name" value="A-D-PHexomutase_C_sf"/>
</dbReference>
<dbReference type="InterPro" id="IPR016066">
    <property type="entry name" value="A-D-PHexomutase_CS"/>
</dbReference>
<dbReference type="InterPro" id="IPR005841">
    <property type="entry name" value="Alpha-D-phosphohexomutase_SF"/>
</dbReference>
<dbReference type="InterPro" id="IPR006352">
    <property type="entry name" value="GlmM_bact"/>
</dbReference>
<dbReference type="InterPro" id="IPR050060">
    <property type="entry name" value="Phosphoglucosamine_mutase"/>
</dbReference>
<dbReference type="NCBIfam" id="TIGR01455">
    <property type="entry name" value="glmM"/>
    <property type="match status" value="1"/>
</dbReference>
<dbReference type="PANTHER" id="PTHR42946:SF1">
    <property type="entry name" value="PHOSPHOGLUCOMUTASE (ALPHA-D-GLUCOSE-1,6-BISPHOSPHATE-DEPENDENT)"/>
    <property type="match status" value="1"/>
</dbReference>
<dbReference type="PANTHER" id="PTHR42946">
    <property type="entry name" value="PHOSPHOHEXOSE MUTASE"/>
    <property type="match status" value="1"/>
</dbReference>
<dbReference type="Pfam" id="PF02878">
    <property type="entry name" value="PGM_PMM_I"/>
    <property type="match status" value="1"/>
</dbReference>
<dbReference type="Pfam" id="PF02879">
    <property type="entry name" value="PGM_PMM_II"/>
    <property type="match status" value="1"/>
</dbReference>
<dbReference type="Pfam" id="PF02880">
    <property type="entry name" value="PGM_PMM_III"/>
    <property type="match status" value="1"/>
</dbReference>
<dbReference type="Pfam" id="PF00408">
    <property type="entry name" value="PGM_PMM_IV"/>
    <property type="match status" value="1"/>
</dbReference>
<dbReference type="PRINTS" id="PR00509">
    <property type="entry name" value="PGMPMM"/>
</dbReference>
<dbReference type="SUPFAM" id="SSF55957">
    <property type="entry name" value="Phosphoglucomutase, C-terminal domain"/>
    <property type="match status" value="1"/>
</dbReference>
<dbReference type="SUPFAM" id="SSF53738">
    <property type="entry name" value="Phosphoglucomutase, first 3 domains"/>
    <property type="match status" value="3"/>
</dbReference>
<dbReference type="PROSITE" id="PS00710">
    <property type="entry name" value="PGM_PMM"/>
    <property type="match status" value="1"/>
</dbReference>
<protein>
    <recommendedName>
        <fullName evidence="1">Phosphoglucosamine mutase</fullName>
        <ecNumber evidence="1">5.4.2.10</ecNumber>
    </recommendedName>
</protein>
<keyword id="KW-0413">Isomerase</keyword>
<keyword id="KW-0460">Magnesium</keyword>
<keyword id="KW-0479">Metal-binding</keyword>
<keyword id="KW-0597">Phosphoprotein</keyword>
<accession>A2RIG0</accession>
<feature type="chain" id="PRO_0000301331" description="Phosphoglucosamine mutase">
    <location>
        <begin position="1"/>
        <end position="452"/>
    </location>
</feature>
<feature type="active site" description="Phosphoserine intermediate" evidence="1">
    <location>
        <position position="101"/>
    </location>
</feature>
<feature type="binding site" description="via phosphate group" evidence="1">
    <location>
        <position position="101"/>
    </location>
    <ligand>
        <name>Mg(2+)</name>
        <dbReference type="ChEBI" id="CHEBI:18420"/>
    </ligand>
</feature>
<feature type="binding site" evidence="1">
    <location>
        <position position="241"/>
    </location>
    <ligand>
        <name>Mg(2+)</name>
        <dbReference type="ChEBI" id="CHEBI:18420"/>
    </ligand>
</feature>
<feature type="binding site" evidence="1">
    <location>
        <position position="243"/>
    </location>
    <ligand>
        <name>Mg(2+)</name>
        <dbReference type="ChEBI" id="CHEBI:18420"/>
    </ligand>
</feature>
<feature type="binding site" evidence="1">
    <location>
        <position position="245"/>
    </location>
    <ligand>
        <name>Mg(2+)</name>
        <dbReference type="ChEBI" id="CHEBI:18420"/>
    </ligand>
</feature>
<feature type="modified residue" description="Phosphoserine" evidence="1">
    <location>
        <position position="101"/>
    </location>
</feature>
<evidence type="ECO:0000255" key="1">
    <source>
        <dbReference type="HAMAP-Rule" id="MF_01554"/>
    </source>
</evidence>